<protein>
    <recommendedName>
        <fullName evidence="1">Glucans biosynthesis protein G</fullName>
    </recommendedName>
</protein>
<keyword id="KW-0574">Periplasm</keyword>
<keyword id="KW-1185">Reference proteome</keyword>
<keyword id="KW-0732">Signal</keyword>
<gene>
    <name evidence="1" type="primary">opgG</name>
    <name type="ordered locus">Sfri_3848</name>
</gene>
<sequence>MVSLLSCGTSASSHIVKKALTRLSLAMAAGLCFNLAAQEPTPPIITPTSPSVTIPLQTYADEQAIVKSANNLNTETKVRFAKTANFDSDTVVKIARKLAQKPYVELKDPLPPGLAKISYDEYRDIRFKPEASIWKAEGLPYQMQLFHRGFYFQDLIEIALVEGKQASHLAYNSEFFTAGDVLSQRLPTQDIGYSGLRIHYPLNNPAYFDELMVFQGASYFRALGKGSDYGLSSRGLALNTAEPEGEEFPIFRAFWVERPNTDSNLIVVHALLDSPSVAGAYRFSVRPGENTHIDVEATLFPRVDLVKVGLAPSTSMFLHSMNGRQNTDDFRPEVHDSDALLILNGRGERLWRPLANPKQLQVSAFMDNSPQGFGLIQRERSFDAYQDLEAHYERRPSLWVEPVGNWGAGEVVLTEIPTDSEIHDNIVSYWKPKQPIAAGSEFHFTYRLIWGSEPEVDDGTVIVARTASGRAEIAKATPRRLFVIDYQVKEGNNDEIPVAKVQSSAGVVTNVVVSRQPKTNGYRLAFEMDPQDAELIELRAELKFTGPRDVETWLYRWTL</sequence>
<proteinExistence type="inferred from homology"/>
<feature type="signal peptide" evidence="1">
    <location>
        <begin position="1"/>
        <end position="37"/>
    </location>
</feature>
<feature type="chain" id="PRO_5000131161" description="Glucans biosynthesis protein G">
    <location>
        <begin position="38"/>
        <end position="559"/>
    </location>
</feature>
<accession>Q07WE1</accession>
<comment type="function">
    <text evidence="1">Involved in the biosynthesis of osmoregulated periplasmic glucans (OPGs).</text>
</comment>
<comment type="pathway">
    <text evidence="1">Glycan metabolism; osmoregulated periplasmic glucan (OPG) biosynthesis.</text>
</comment>
<comment type="subcellular location">
    <subcellularLocation>
        <location evidence="1">Periplasm</location>
    </subcellularLocation>
</comment>
<comment type="similarity">
    <text evidence="1">Belongs to the OpgD/OpgG family.</text>
</comment>
<name>OPGG_SHEFN</name>
<evidence type="ECO:0000255" key="1">
    <source>
        <dbReference type="HAMAP-Rule" id="MF_01069"/>
    </source>
</evidence>
<dbReference type="EMBL" id="CP000447">
    <property type="protein sequence ID" value="ABI73673.1"/>
    <property type="molecule type" value="Genomic_DNA"/>
</dbReference>
<dbReference type="RefSeq" id="WP_011639257.1">
    <property type="nucleotide sequence ID" value="NC_008345.1"/>
</dbReference>
<dbReference type="SMR" id="Q07WE1"/>
<dbReference type="STRING" id="318167.Sfri_3848"/>
<dbReference type="KEGG" id="sfr:Sfri_3848"/>
<dbReference type="eggNOG" id="COG3131">
    <property type="taxonomic scope" value="Bacteria"/>
</dbReference>
<dbReference type="HOGENOM" id="CLU_023403_2_0_6"/>
<dbReference type="OrthoDB" id="335750at2"/>
<dbReference type="UniPathway" id="UPA00637"/>
<dbReference type="Proteomes" id="UP000000684">
    <property type="component" value="Chromosome"/>
</dbReference>
<dbReference type="GO" id="GO:0030288">
    <property type="term" value="C:outer membrane-bounded periplasmic space"/>
    <property type="evidence" value="ECO:0007669"/>
    <property type="project" value="TreeGrafter"/>
</dbReference>
<dbReference type="GO" id="GO:0030246">
    <property type="term" value="F:carbohydrate binding"/>
    <property type="evidence" value="ECO:0007669"/>
    <property type="project" value="InterPro"/>
</dbReference>
<dbReference type="GO" id="GO:0003824">
    <property type="term" value="F:catalytic activity"/>
    <property type="evidence" value="ECO:0007669"/>
    <property type="project" value="InterPro"/>
</dbReference>
<dbReference type="GO" id="GO:0051274">
    <property type="term" value="P:beta-glucan biosynthetic process"/>
    <property type="evidence" value="ECO:0007669"/>
    <property type="project" value="TreeGrafter"/>
</dbReference>
<dbReference type="FunFam" id="2.60.40.10:FF:001915">
    <property type="entry name" value="Glucans biosynthesis protein G"/>
    <property type="match status" value="1"/>
</dbReference>
<dbReference type="FunFam" id="2.70.98.10:FF:000001">
    <property type="entry name" value="Glucans biosynthesis protein G"/>
    <property type="match status" value="1"/>
</dbReference>
<dbReference type="Gene3D" id="2.70.98.10">
    <property type="match status" value="1"/>
</dbReference>
<dbReference type="Gene3D" id="2.60.40.10">
    <property type="entry name" value="Immunoglobulins"/>
    <property type="match status" value="1"/>
</dbReference>
<dbReference type="HAMAP" id="MF_01069">
    <property type="entry name" value="MdoG_OpgG"/>
    <property type="match status" value="1"/>
</dbReference>
<dbReference type="InterPro" id="IPR011013">
    <property type="entry name" value="Gal_mutarotase_sf_dom"/>
</dbReference>
<dbReference type="InterPro" id="IPR014718">
    <property type="entry name" value="GH-type_carb-bd"/>
</dbReference>
<dbReference type="InterPro" id="IPR014438">
    <property type="entry name" value="Glucan_biosyn_MdoG/MdoD"/>
</dbReference>
<dbReference type="InterPro" id="IPR007444">
    <property type="entry name" value="Glucan_biosyn_MdoG_C"/>
</dbReference>
<dbReference type="InterPro" id="IPR013783">
    <property type="entry name" value="Ig-like_fold"/>
</dbReference>
<dbReference type="InterPro" id="IPR014756">
    <property type="entry name" value="Ig_E-set"/>
</dbReference>
<dbReference type="InterPro" id="IPR023704">
    <property type="entry name" value="MdoG_OpgG"/>
</dbReference>
<dbReference type="PANTHER" id="PTHR30504">
    <property type="entry name" value="GLUCANS BIOSYNTHESIS PROTEIN"/>
    <property type="match status" value="1"/>
</dbReference>
<dbReference type="PANTHER" id="PTHR30504:SF2">
    <property type="entry name" value="GLUCANS BIOSYNTHESIS PROTEIN G"/>
    <property type="match status" value="1"/>
</dbReference>
<dbReference type="Pfam" id="PF04349">
    <property type="entry name" value="MdoG"/>
    <property type="match status" value="1"/>
</dbReference>
<dbReference type="PIRSF" id="PIRSF006281">
    <property type="entry name" value="MdoG"/>
    <property type="match status" value="1"/>
</dbReference>
<dbReference type="SUPFAM" id="SSF81296">
    <property type="entry name" value="E set domains"/>
    <property type="match status" value="1"/>
</dbReference>
<dbReference type="SUPFAM" id="SSF74650">
    <property type="entry name" value="Galactose mutarotase-like"/>
    <property type="match status" value="1"/>
</dbReference>
<organism>
    <name type="scientific">Shewanella frigidimarina (strain NCIMB 400)</name>
    <dbReference type="NCBI Taxonomy" id="318167"/>
    <lineage>
        <taxon>Bacteria</taxon>
        <taxon>Pseudomonadati</taxon>
        <taxon>Pseudomonadota</taxon>
        <taxon>Gammaproteobacteria</taxon>
        <taxon>Alteromonadales</taxon>
        <taxon>Shewanellaceae</taxon>
        <taxon>Shewanella</taxon>
    </lineage>
</organism>
<reference key="1">
    <citation type="submission" date="2006-08" db="EMBL/GenBank/DDBJ databases">
        <title>Complete sequence of Shewanella frigidimarina NCIMB 400.</title>
        <authorList>
            <consortium name="US DOE Joint Genome Institute"/>
            <person name="Copeland A."/>
            <person name="Lucas S."/>
            <person name="Lapidus A."/>
            <person name="Barry K."/>
            <person name="Detter J.C."/>
            <person name="Glavina del Rio T."/>
            <person name="Hammon N."/>
            <person name="Israni S."/>
            <person name="Dalin E."/>
            <person name="Tice H."/>
            <person name="Pitluck S."/>
            <person name="Fredrickson J.K."/>
            <person name="Kolker E."/>
            <person name="McCuel L.A."/>
            <person name="DiChristina T."/>
            <person name="Nealson K.H."/>
            <person name="Newman D."/>
            <person name="Tiedje J.M."/>
            <person name="Zhou J."/>
            <person name="Romine M.F."/>
            <person name="Culley D.E."/>
            <person name="Serres M."/>
            <person name="Chertkov O."/>
            <person name="Brettin T."/>
            <person name="Bruce D."/>
            <person name="Han C."/>
            <person name="Tapia R."/>
            <person name="Gilna P."/>
            <person name="Schmutz J."/>
            <person name="Larimer F."/>
            <person name="Land M."/>
            <person name="Hauser L."/>
            <person name="Kyrpides N."/>
            <person name="Mikhailova N."/>
            <person name="Richardson P."/>
        </authorList>
    </citation>
    <scope>NUCLEOTIDE SEQUENCE [LARGE SCALE GENOMIC DNA]</scope>
    <source>
        <strain>NCIMB 400</strain>
    </source>
</reference>